<protein>
    <recommendedName>
        <fullName>1-aminocyclopropane-1-carboxylate oxidase homolog 3</fullName>
    </recommendedName>
</protein>
<feature type="chain" id="PRO_0000274939" description="1-aminocyclopropane-1-carboxylate oxidase homolog 3">
    <location>
        <begin position="1"/>
        <end position="369"/>
    </location>
</feature>
<feature type="domain" description="Fe2OG dioxygenase" evidence="2">
    <location>
        <begin position="217"/>
        <end position="318"/>
    </location>
</feature>
<feature type="binding site" evidence="2">
    <location>
        <position position="241"/>
    </location>
    <ligand>
        <name>Fe cation</name>
        <dbReference type="ChEBI" id="CHEBI:24875"/>
    </ligand>
</feature>
<feature type="binding site" evidence="2">
    <location>
        <position position="243"/>
    </location>
    <ligand>
        <name>Fe cation</name>
        <dbReference type="ChEBI" id="CHEBI:24875"/>
    </ligand>
</feature>
<feature type="binding site" evidence="2">
    <location>
        <position position="297"/>
    </location>
    <ligand>
        <name>Fe cation</name>
        <dbReference type="ChEBI" id="CHEBI:24875"/>
    </ligand>
</feature>
<feature type="splice variant" id="VSP_022947" description="In isoform 2." evidence="3">
    <original>LITNDKFISLEHRVLANRATRARVSVACFFTTGVRPNPRMYGPIRELVSEENPPKYRETTIKDYATYFNAKGLDGTSALLHFKI</original>
    <variation>FGAQSIGEQSNKSSSVCRMFLYHWSKTES</variation>
    <location>
        <begin position="286"/>
        <end position="369"/>
    </location>
</feature>
<feature type="sequence conflict" description="In Ref. 3; AAK44137." evidence="3" ref="3">
    <original>D</original>
    <variation>G</variation>
    <location>
        <position position="57"/>
    </location>
</feature>
<accession>Q8H1S4</accession>
<accession>Q3EDH6</accession>
<accession>Q94K40</accession>
<accession>Q9SHK4</accession>
<sequence>MEMMKIDPLFDRASELKAFDETKTGVKGLVDSGVSQVPRIFHHPTVKLSTPKPLPSDLLHLKTIPTIDLGGRDFQDAIKRNNAIEEIKEAAAKWGFFQVINHGVSLELLEKMKKGVRDFHEQSQEVRKEFYSRDFSRRFLYLSNFDLFSSPAANWRDTFSCTMAPDTPKPQDLPEICRDIMMEYSKQVMNLGKFLFELLSEALGLEPNHLNDMDCSKGLLMLSHYYPPCPEPDLTLGTSQHSDNSFLTVLLPDQIEGLQVRREGHWFDVPHVSGALIINIGDLLQLITNDKFISLEHRVLANRATRARVSVACFFTTGVRPNPRMYGPIRELVSEENPPKYRETTIKDYATYFNAKGLDGTSALLHFKI</sequence>
<evidence type="ECO:0000250" key="1"/>
<evidence type="ECO:0000255" key="2">
    <source>
        <dbReference type="PROSITE-ProRule" id="PRU00805"/>
    </source>
</evidence>
<evidence type="ECO:0000305" key="3"/>
<comment type="cofactor">
    <cofactor evidence="1">
        <name>Fe cation</name>
        <dbReference type="ChEBI" id="CHEBI:24875"/>
    </cofactor>
</comment>
<comment type="alternative products">
    <event type="alternative splicing"/>
    <isoform>
        <id>Q8H1S4-1</id>
        <name>1</name>
        <sequence type="displayed"/>
    </isoform>
    <isoform>
        <id>Q8H1S4-2</id>
        <name>2</name>
        <sequence type="described" ref="VSP_022947"/>
    </isoform>
</comment>
<comment type="miscellaneous">
    <molecule>Isoform 2</molecule>
    <text evidence="3">May be due to a competing acceptor splice site.</text>
</comment>
<comment type="similarity">
    <text evidence="3">Belongs to the iron/ascorbate-dependent oxidoreductase family.</text>
</comment>
<comment type="sequence caution" evidence="3">
    <conflict type="erroneous gene model prediction">
        <sequence resource="EMBL-CDS" id="AAF24827"/>
    </conflict>
    <text>The predicted gene At1g06630 has been split into 4 genes: At1g06620, At1g06630, At1g06640 and At1g06650.</text>
</comment>
<reference key="1">
    <citation type="journal article" date="2000" name="Nature">
        <title>Sequence and analysis of chromosome 1 of the plant Arabidopsis thaliana.</title>
        <authorList>
            <person name="Theologis A."/>
            <person name="Ecker J.R."/>
            <person name="Palm C.J."/>
            <person name="Federspiel N.A."/>
            <person name="Kaul S."/>
            <person name="White O."/>
            <person name="Alonso J."/>
            <person name="Altafi H."/>
            <person name="Araujo R."/>
            <person name="Bowman C.L."/>
            <person name="Brooks S.Y."/>
            <person name="Buehler E."/>
            <person name="Chan A."/>
            <person name="Chao Q."/>
            <person name="Chen H."/>
            <person name="Cheuk R.F."/>
            <person name="Chin C.W."/>
            <person name="Chung M.K."/>
            <person name="Conn L."/>
            <person name="Conway A.B."/>
            <person name="Conway A.R."/>
            <person name="Creasy T.H."/>
            <person name="Dewar K."/>
            <person name="Dunn P."/>
            <person name="Etgu P."/>
            <person name="Feldblyum T.V."/>
            <person name="Feng J.-D."/>
            <person name="Fong B."/>
            <person name="Fujii C.Y."/>
            <person name="Gill J.E."/>
            <person name="Goldsmith A.D."/>
            <person name="Haas B."/>
            <person name="Hansen N.F."/>
            <person name="Hughes B."/>
            <person name="Huizar L."/>
            <person name="Hunter J.L."/>
            <person name="Jenkins J."/>
            <person name="Johnson-Hopson C."/>
            <person name="Khan S."/>
            <person name="Khaykin E."/>
            <person name="Kim C.J."/>
            <person name="Koo H.L."/>
            <person name="Kremenetskaia I."/>
            <person name="Kurtz D.B."/>
            <person name="Kwan A."/>
            <person name="Lam B."/>
            <person name="Langin-Hooper S."/>
            <person name="Lee A."/>
            <person name="Lee J.M."/>
            <person name="Lenz C.A."/>
            <person name="Li J.H."/>
            <person name="Li Y.-P."/>
            <person name="Lin X."/>
            <person name="Liu S.X."/>
            <person name="Liu Z.A."/>
            <person name="Luros J.S."/>
            <person name="Maiti R."/>
            <person name="Marziali A."/>
            <person name="Militscher J."/>
            <person name="Miranda M."/>
            <person name="Nguyen M."/>
            <person name="Nierman W.C."/>
            <person name="Osborne B.I."/>
            <person name="Pai G."/>
            <person name="Peterson J."/>
            <person name="Pham P.K."/>
            <person name="Rizzo M."/>
            <person name="Rooney T."/>
            <person name="Rowley D."/>
            <person name="Sakano H."/>
            <person name="Salzberg S.L."/>
            <person name="Schwartz J.R."/>
            <person name="Shinn P."/>
            <person name="Southwick A.M."/>
            <person name="Sun H."/>
            <person name="Tallon L.J."/>
            <person name="Tambunga G."/>
            <person name="Toriumi M.J."/>
            <person name="Town C.D."/>
            <person name="Utterback T."/>
            <person name="Van Aken S."/>
            <person name="Vaysberg M."/>
            <person name="Vysotskaia V.S."/>
            <person name="Walker M."/>
            <person name="Wu D."/>
            <person name="Yu G."/>
            <person name="Fraser C.M."/>
            <person name="Venter J.C."/>
            <person name="Davis R.W."/>
        </authorList>
    </citation>
    <scope>NUCLEOTIDE SEQUENCE [LARGE SCALE GENOMIC DNA]</scope>
    <source>
        <strain>cv. Columbia</strain>
    </source>
</reference>
<reference key="2">
    <citation type="journal article" date="2017" name="Plant J.">
        <title>Araport11: a complete reannotation of the Arabidopsis thaliana reference genome.</title>
        <authorList>
            <person name="Cheng C.Y."/>
            <person name="Krishnakumar V."/>
            <person name="Chan A.P."/>
            <person name="Thibaud-Nissen F."/>
            <person name="Schobel S."/>
            <person name="Town C.D."/>
        </authorList>
    </citation>
    <scope>GENOME REANNOTATION</scope>
    <source>
        <strain>cv. Columbia</strain>
    </source>
</reference>
<reference key="3">
    <citation type="journal article" date="2003" name="Science">
        <title>Empirical analysis of transcriptional activity in the Arabidopsis genome.</title>
        <authorList>
            <person name="Yamada K."/>
            <person name="Lim J."/>
            <person name="Dale J.M."/>
            <person name="Chen H."/>
            <person name="Shinn P."/>
            <person name="Palm C.J."/>
            <person name="Southwick A.M."/>
            <person name="Wu H.C."/>
            <person name="Kim C.J."/>
            <person name="Nguyen M."/>
            <person name="Pham P.K."/>
            <person name="Cheuk R.F."/>
            <person name="Karlin-Newmann G."/>
            <person name="Liu S.X."/>
            <person name="Lam B."/>
            <person name="Sakano H."/>
            <person name="Wu T."/>
            <person name="Yu G."/>
            <person name="Miranda M."/>
            <person name="Quach H.L."/>
            <person name="Tripp M."/>
            <person name="Chang C.H."/>
            <person name="Lee J.M."/>
            <person name="Toriumi M.J."/>
            <person name="Chan M.M."/>
            <person name="Tang C.C."/>
            <person name="Onodera C.S."/>
            <person name="Deng J.M."/>
            <person name="Akiyama K."/>
            <person name="Ansari Y."/>
            <person name="Arakawa T."/>
            <person name="Banh J."/>
            <person name="Banno F."/>
            <person name="Bowser L."/>
            <person name="Brooks S.Y."/>
            <person name="Carninci P."/>
            <person name="Chao Q."/>
            <person name="Choy N."/>
            <person name="Enju A."/>
            <person name="Goldsmith A.D."/>
            <person name="Gurjal M."/>
            <person name="Hansen N.F."/>
            <person name="Hayashizaki Y."/>
            <person name="Johnson-Hopson C."/>
            <person name="Hsuan V.W."/>
            <person name="Iida K."/>
            <person name="Karnes M."/>
            <person name="Khan S."/>
            <person name="Koesema E."/>
            <person name="Ishida J."/>
            <person name="Jiang P.X."/>
            <person name="Jones T."/>
            <person name="Kawai J."/>
            <person name="Kamiya A."/>
            <person name="Meyers C."/>
            <person name="Nakajima M."/>
            <person name="Narusaka M."/>
            <person name="Seki M."/>
            <person name="Sakurai T."/>
            <person name="Satou M."/>
            <person name="Tamse R."/>
            <person name="Vaysberg M."/>
            <person name="Wallender E.K."/>
            <person name="Wong C."/>
            <person name="Yamamura Y."/>
            <person name="Yuan S."/>
            <person name="Shinozaki K."/>
            <person name="Davis R.W."/>
            <person name="Theologis A."/>
            <person name="Ecker J.R."/>
        </authorList>
    </citation>
    <scope>NUCLEOTIDE SEQUENCE [LARGE SCALE MRNA] (ISOFORM 1)</scope>
    <source>
        <strain>cv. Columbia</strain>
    </source>
</reference>
<gene>
    <name type="ordered locus">At1g06650</name>
    <name type="ORF">F12K11.26</name>
    <name type="ORF">F12K11.6</name>
</gene>
<proteinExistence type="evidence at transcript level"/>
<name>ACCH3_ARATH</name>
<dbReference type="EMBL" id="AC007592">
    <property type="protein sequence ID" value="AAF24827.1"/>
    <property type="status" value="ALT_SEQ"/>
    <property type="molecule type" value="Genomic_DNA"/>
</dbReference>
<dbReference type="EMBL" id="CP002684">
    <property type="protein sequence ID" value="AEE28018.1"/>
    <property type="molecule type" value="Genomic_DNA"/>
</dbReference>
<dbReference type="EMBL" id="CP002684">
    <property type="protein sequence ID" value="AEE28019.1"/>
    <property type="molecule type" value="Genomic_DNA"/>
</dbReference>
<dbReference type="EMBL" id="AY142493">
    <property type="protein sequence ID" value="AAN13044.1"/>
    <property type="molecule type" value="mRNA"/>
</dbReference>
<dbReference type="EMBL" id="AF370322">
    <property type="protein sequence ID" value="AAK44137.1"/>
    <property type="molecule type" value="mRNA"/>
</dbReference>
<dbReference type="PIR" id="D86201">
    <property type="entry name" value="D86201"/>
</dbReference>
<dbReference type="RefSeq" id="NP_172150.1">
    <molecule id="Q8H1S4-1"/>
    <property type="nucleotide sequence ID" value="NM_100542.4"/>
</dbReference>
<dbReference type="RefSeq" id="NP_849602.1">
    <molecule id="Q8H1S4-2"/>
    <property type="nucleotide sequence ID" value="NM_179271.2"/>
</dbReference>
<dbReference type="SMR" id="Q8H1S4"/>
<dbReference type="BioGRID" id="22416">
    <property type="interactions" value="1"/>
</dbReference>
<dbReference type="FunCoup" id="Q8H1S4">
    <property type="interactions" value="193"/>
</dbReference>
<dbReference type="STRING" id="3702.Q8H1S4"/>
<dbReference type="iPTMnet" id="Q8H1S4"/>
<dbReference type="PaxDb" id="3702-AT1G06650.2"/>
<dbReference type="ProteomicsDB" id="244347">
    <molecule id="Q8H1S4-1"/>
</dbReference>
<dbReference type="EnsemblPlants" id="AT1G06650.1">
    <molecule id="Q8H1S4-2"/>
    <property type="protein sequence ID" value="AT1G06650.1"/>
    <property type="gene ID" value="AT1G06650"/>
</dbReference>
<dbReference type="EnsemblPlants" id="AT1G06650.2">
    <molecule id="Q8H1S4-1"/>
    <property type="protein sequence ID" value="AT1G06650.2"/>
    <property type="gene ID" value="AT1G06650"/>
</dbReference>
<dbReference type="GeneID" id="837175"/>
<dbReference type="Gramene" id="AT1G06650.1">
    <molecule id="Q8H1S4-2"/>
    <property type="protein sequence ID" value="AT1G06650.1"/>
    <property type="gene ID" value="AT1G06650"/>
</dbReference>
<dbReference type="Gramene" id="AT1G06650.2">
    <molecule id="Q8H1S4-1"/>
    <property type="protein sequence ID" value="AT1G06650.2"/>
    <property type="gene ID" value="AT1G06650"/>
</dbReference>
<dbReference type="KEGG" id="ath:AT1G06650"/>
<dbReference type="Araport" id="AT1G06650"/>
<dbReference type="TAIR" id="AT1G06650"/>
<dbReference type="eggNOG" id="KOG0143">
    <property type="taxonomic scope" value="Eukaryota"/>
</dbReference>
<dbReference type="HOGENOM" id="CLU_010119_0_0_1"/>
<dbReference type="InParanoid" id="Q8H1S4"/>
<dbReference type="OMA" id="GNTRHTD"/>
<dbReference type="PhylomeDB" id="Q8H1S4"/>
<dbReference type="BioCyc" id="ARA:AT1G06650-MONOMER"/>
<dbReference type="PRO" id="PR:Q8H1S4"/>
<dbReference type="Proteomes" id="UP000006548">
    <property type="component" value="Chromosome 1"/>
</dbReference>
<dbReference type="ExpressionAtlas" id="Q8H1S4">
    <property type="expression patterns" value="baseline and differential"/>
</dbReference>
<dbReference type="GO" id="GO:0005576">
    <property type="term" value="C:extracellular region"/>
    <property type="evidence" value="ECO:0007005"/>
    <property type="project" value="TAIR"/>
</dbReference>
<dbReference type="GO" id="GO:0051213">
    <property type="term" value="F:dioxygenase activity"/>
    <property type="evidence" value="ECO:0007669"/>
    <property type="project" value="UniProtKB-ARBA"/>
</dbReference>
<dbReference type="GO" id="GO:0046872">
    <property type="term" value="F:metal ion binding"/>
    <property type="evidence" value="ECO:0007669"/>
    <property type="project" value="UniProtKB-KW"/>
</dbReference>
<dbReference type="GO" id="GO:0009058">
    <property type="term" value="P:biosynthetic process"/>
    <property type="evidence" value="ECO:0007669"/>
    <property type="project" value="UniProtKB-ARBA"/>
</dbReference>
<dbReference type="FunFam" id="2.60.120.330:FF:000005">
    <property type="entry name" value="1-aminocyclopropane-1-carboxylate oxidase homolog 1"/>
    <property type="match status" value="1"/>
</dbReference>
<dbReference type="Gene3D" id="2.60.120.330">
    <property type="entry name" value="B-lactam Antibiotic, Isopenicillin N Synthase, Chain"/>
    <property type="match status" value="1"/>
</dbReference>
<dbReference type="InterPro" id="IPR026992">
    <property type="entry name" value="DIOX_N"/>
</dbReference>
<dbReference type="InterPro" id="IPR044861">
    <property type="entry name" value="IPNS-like_FE2OG_OXY"/>
</dbReference>
<dbReference type="InterPro" id="IPR027443">
    <property type="entry name" value="IPNS-like_sf"/>
</dbReference>
<dbReference type="InterPro" id="IPR005123">
    <property type="entry name" value="Oxoglu/Fe-dep_dioxygenase_dom"/>
</dbReference>
<dbReference type="PANTHER" id="PTHR10209:SF784">
    <property type="entry name" value="1-AMINOCYCLOPROPANE-1-CARBOXYLATE OXIDASE HOMOLOG 3"/>
    <property type="match status" value="1"/>
</dbReference>
<dbReference type="PANTHER" id="PTHR10209">
    <property type="entry name" value="OXIDOREDUCTASE, 2OG-FE II OXYGENASE FAMILY PROTEIN"/>
    <property type="match status" value="1"/>
</dbReference>
<dbReference type="Pfam" id="PF03171">
    <property type="entry name" value="2OG-FeII_Oxy"/>
    <property type="match status" value="1"/>
</dbReference>
<dbReference type="Pfam" id="PF14226">
    <property type="entry name" value="DIOX_N"/>
    <property type="match status" value="1"/>
</dbReference>
<dbReference type="SUPFAM" id="SSF51197">
    <property type="entry name" value="Clavaminate synthase-like"/>
    <property type="match status" value="1"/>
</dbReference>
<dbReference type="PROSITE" id="PS51471">
    <property type="entry name" value="FE2OG_OXY"/>
    <property type="match status" value="1"/>
</dbReference>
<organism>
    <name type="scientific">Arabidopsis thaliana</name>
    <name type="common">Mouse-ear cress</name>
    <dbReference type="NCBI Taxonomy" id="3702"/>
    <lineage>
        <taxon>Eukaryota</taxon>
        <taxon>Viridiplantae</taxon>
        <taxon>Streptophyta</taxon>
        <taxon>Embryophyta</taxon>
        <taxon>Tracheophyta</taxon>
        <taxon>Spermatophyta</taxon>
        <taxon>Magnoliopsida</taxon>
        <taxon>eudicotyledons</taxon>
        <taxon>Gunneridae</taxon>
        <taxon>Pentapetalae</taxon>
        <taxon>rosids</taxon>
        <taxon>malvids</taxon>
        <taxon>Brassicales</taxon>
        <taxon>Brassicaceae</taxon>
        <taxon>Camelineae</taxon>
        <taxon>Arabidopsis</taxon>
    </lineage>
</organism>
<keyword id="KW-0025">Alternative splicing</keyword>
<keyword id="KW-0408">Iron</keyword>
<keyword id="KW-0479">Metal-binding</keyword>
<keyword id="KW-0560">Oxidoreductase</keyword>
<keyword id="KW-1185">Reference proteome</keyword>